<accession>Q99LP6</accession>
<accession>Q3TSZ3</accession>
<feature type="transit peptide" description="Mitochondrion" evidence="1">
    <location>
        <begin position="1"/>
        <end position="27"/>
    </location>
</feature>
<feature type="chain" id="PRO_0000013050" description="GrpE protein homolog 1, mitochondrial">
    <location>
        <begin position="28"/>
        <end position="217"/>
    </location>
</feature>
<feature type="region of interest" description="Disordered" evidence="2">
    <location>
        <begin position="37"/>
        <end position="56"/>
    </location>
</feature>
<feature type="modified residue" description="N6-acetyllysine; alternate" evidence="4">
    <location>
        <position position="94"/>
    </location>
</feature>
<feature type="modified residue" description="N6-succinyllysine; alternate" evidence="5">
    <location>
        <position position="94"/>
    </location>
</feature>
<feature type="modified residue" description="N6-acetyllysine" evidence="4">
    <location>
        <position position="100"/>
    </location>
</feature>
<feature type="modified residue" description="N6-succinyllysine" evidence="5">
    <location>
        <position position="120"/>
    </location>
</feature>
<feature type="modified residue" description="N6-acetyllysine; alternate" evidence="4">
    <location>
        <position position="215"/>
    </location>
</feature>
<feature type="modified residue" description="N6-succinyllysine; alternate" evidence="5">
    <location>
        <position position="215"/>
    </location>
</feature>
<gene>
    <name type="primary">Grpel1</name>
</gene>
<reference key="1">
    <citation type="journal article" date="2005" name="Science">
        <title>The transcriptional landscape of the mammalian genome.</title>
        <authorList>
            <person name="Carninci P."/>
            <person name="Kasukawa T."/>
            <person name="Katayama S."/>
            <person name="Gough J."/>
            <person name="Frith M.C."/>
            <person name="Maeda N."/>
            <person name="Oyama R."/>
            <person name="Ravasi T."/>
            <person name="Lenhard B."/>
            <person name="Wells C."/>
            <person name="Kodzius R."/>
            <person name="Shimokawa K."/>
            <person name="Bajic V.B."/>
            <person name="Brenner S.E."/>
            <person name="Batalov S."/>
            <person name="Forrest A.R."/>
            <person name="Zavolan M."/>
            <person name="Davis M.J."/>
            <person name="Wilming L.G."/>
            <person name="Aidinis V."/>
            <person name="Allen J.E."/>
            <person name="Ambesi-Impiombato A."/>
            <person name="Apweiler R."/>
            <person name="Aturaliya R.N."/>
            <person name="Bailey T.L."/>
            <person name="Bansal M."/>
            <person name="Baxter L."/>
            <person name="Beisel K.W."/>
            <person name="Bersano T."/>
            <person name="Bono H."/>
            <person name="Chalk A.M."/>
            <person name="Chiu K.P."/>
            <person name="Choudhary V."/>
            <person name="Christoffels A."/>
            <person name="Clutterbuck D.R."/>
            <person name="Crowe M.L."/>
            <person name="Dalla E."/>
            <person name="Dalrymple B.P."/>
            <person name="de Bono B."/>
            <person name="Della Gatta G."/>
            <person name="di Bernardo D."/>
            <person name="Down T."/>
            <person name="Engstrom P."/>
            <person name="Fagiolini M."/>
            <person name="Faulkner G."/>
            <person name="Fletcher C.F."/>
            <person name="Fukushima T."/>
            <person name="Furuno M."/>
            <person name="Futaki S."/>
            <person name="Gariboldi M."/>
            <person name="Georgii-Hemming P."/>
            <person name="Gingeras T.R."/>
            <person name="Gojobori T."/>
            <person name="Green R.E."/>
            <person name="Gustincich S."/>
            <person name="Harbers M."/>
            <person name="Hayashi Y."/>
            <person name="Hensch T.K."/>
            <person name="Hirokawa N."/>
            <person name="Hill D."/>
            <person name="Huminiecki L."/>
            <person name="Iacono M."/>
            <person name="Ikeo K."/>
            <person name="Iwama A."/>
            <person name="Ishikawa T."/>
            <person name="Jakt M."/>
            <person name="Kanapin A."/>
            <person name="Katoh M."/>
            <person name="Kawasawa Y."/>
            <person name="Kelso J."/>
            <person name="Kitamura H."/>
            <person name="Kitano H."/>
            <person name="Kollias G."/>
            <person name="Krishnan S.P."/>
            <person name="Kruger A."/>
            <person name="Kummerfeld S.K."/>
            <person name="Kurochkin I.V."/>
            <person name="Lareau L.F."/>
            <person name="Lazarevic D."/>
            <person name="Lipovich L."/>
            <person name="Liu J."/>
            <person name="Liuni S."/>
            <person name="McWilliam S."/>
            <person name="Madan Babu M."/>
            <person name="Madera M."/>
            <person name="Marchionni L."/>
            <person name="Matsuda H."/>
            <person name="Matsuzawa S."/>
            <person name="Miki H."/>
            <person name="Mignone F."/>
            <person name="Miyake S."/>
            <person name="Morris K."/>
            <person name="Mottagui-Tabar S."/>
            <person name="Mulder N."/>
            <person name="Nakano N."/>
            <person name="Nakauchi H."/>
            <person name="Ng P."/>
            <person name="Nilsson R."/>
            <person name="Nishiguchi S."/>
            <person name="Nishikawa S."/>
            <person name="Nori F."/>
            <person name="Ohara O."/>
            <person name="Okazaki Y."/>
            <person name="Orlando V."/>
            <person name="Pang K.C."/>
            <person name="Pavan W.J."/>
            <person name="Pavesi G."/>
            <person name="Pesole G."/>
            <person name="Petrovsky N."/>
            <person name="Piazza S."/>
            <person name="Reed J."/>
            <person name="Reid J.F."/>
            <person name="Ring B.Z."/>
            <person name="Ringwald M."/>
            <person name="Rost B."/>
            <person name="Ruan Y."/>
            <person name="Salzberg S.L."/>
            <person name="Sandelin A."/>
            <person name="Schneider C."/>
            <person name="Schoenbach C."/>
            <person name="Sekiguchi K."/>
            <person name="Semple C.A."/>
            <person name="Seno S."/>
            <person name="Sessa L."/>
            <person name="Sheng Y."/>
            <person name="Shibata Y."/>
            <person name="Shimada H."/>
            <person name="Shimada K."/>
            <person name="Silva D."/>
            <person name="Sinclair B."/>
            <person name="Sperling S."/>
            <person name="Stupka E."/>
            <person name="Sugiura K."/>
            <person name="Sultana R."/>
            <person name="Takenaka Y."/>
            <person name="Taki K."/>
            <person name="Tammoja K."/>
            <person name="Tan S.L."/>
            <person name="Tang S."/>
            <person name="Taylor M.S."/>
            <person name="Tegner J."/>
            <person name="Teichmann S.A."/>
            <person name="Ueda H.R."/>
            <person name="van Nimwegen E."/>
            <person name="Verardo R."/>
            <person name="Wei C.L."/>
            <person name="Yagi K."/>
            <person name="Yamanishi H."/>
            <person name="Zabarovsky E."/>
            <person name="Zhu S."/>
            <person name="Zimmer A."/>
            <person name="Hide W."/>
            <person name="Bult C."/>
            <person name="Grimmond S.M."/>
            <person name="Teasdale R.D."/>
            <person name="Liu E.T."/>
            <person name="Brusic V."/>
            <person name="Quackenbush J."/>
            <person name="Wahlestedt C."/>
            <person name="Mattick J.S."/>
            <person name="Hume D.A."/>
            <person name="Kai C."/>
            <person name="Sasaki D."/>
            <person name="Tomaru Y."/>
            <person name="Fukuda S."/>
            <person name="Kanamori-Katayama M."/>
            <person name="Suzuki M."/>
            <person name="Aoki J."/>
            <person name="Arakawa T."/>
            <person name="Iida J."/>
            <person name="Imamura K."/>
            <person name="Itoh M."/>
            <person name="Kato T."/>
            <person name="Kawaji H."/>
            <person name="Kawagashira N."/>
            <person name="Kawashima T."/>
            <person name="Kojima M."/>
            <person name="Kondo S."/>
            <person name="Konno H."/>
            <person name="Nakano K."/>
            <person name="Ninomiya N."/>
            <person name="Nishio T."/>
            <person name="Okada M."/>
            <person name="Plessy C."/>
            <person name="Shibata K."/>
            <person name="Shiraki T."/>
            <person name="Suzuki S."/>
            <person name="Tagami M."/>
            <person name="Waki K."/>
            <person name="Watahiki A."/>
            <person name="Okamura-Oho Y."/>
            <person name="Suzuki H."/>
            <person name="Kawai J."/>
            <person name="Hayashizaki Y."/>
        </authorList>
    </citation>
    <scope>NUCLEOTIDE SEQUENCE [LARGE SCALE MRNA]</scope>
    <source>
        <strain>C57BL/6J</strain>
        <strain>NOD</strain>
        <tissue>Cerebellum</tissue>
        <tissue>Liver</tissue>
        <tissue>Thymus</tissue>
    </source>
</reference>
<reference key="2">
    <citation type="journal article" date="2004" name="Genome Res.">
        <title>The status, quality, and expansion of the NIH full-length cDNA project: the Mammalian Gene Collection (MGC).</title>
        <authorList>
            <consortium name="The MGC Project Team"/>
        </authorList>
    </citation>
    <scope>NUCLEOTIDE SEQUENCE [LARGE SCALE MRNA]</scope>
    <source>
        <strain>Czech II</strain>
        <tissue>Mammary tumor</tissue>
    </source>
</reference>
<reference key="3">
    <citation type="journal article" date="2010" name="Cell">
        <title>A tissue-specific atlas of mouse protein phosphorylation and expression.</title>
        <authorList>
            <person name="Huttlin E.L."/>
            <person name="Jedrychowski M.P."/>
            <person name="Elias J.E."/>
            <person name="Goswami T."/>
            <person name="Rad R."/>
            <person name="Beausoleil S.A."/>
            <person name="Villen J."/>
            <person name="Haas W."/>
            <person name="Sowa M.E."/>
            <person name="Gygi S.P."/>
        </authorList>
    </citation>
    <scope>IDENTIFICATION BY MASS SPECTROMETRY [LARGE SCALE ANALYSIS]</scope>
    <source>
        <tissue>Brain</tissue>
        <tissue>Brown adipose tissue</tissue>
        <tissue>Heart</tissue>
        <tissue>Kidney</tissue>
        <tissue>Liver</tissue>
        <tissue>Lung</tissue>
        <tissue>Pancreas</tissue>
        <tissue>Spleen</tissue>
        <tissue>Testis</tissue>
    </source>
</reference>
<reference key="4">
    <citation type="journal article" date="2013" name="Mol. Cell">
        <title>SIRT5-mediated lysine desuccinylation impacts diverse metabolic pathways.</title>
        <authorList>
            <person name="Park J."/>
            <person name="Chen Y."/>
            <person name="Tishkoff D.X."/>
            <person name="Peng C."/>
            <person name="Tan M."/>
            <person name="Dai L."/>
            <person name="Xie Z."/>
            <person name="Zhang Y."/>
            <person name="Zwaans B.M."/>
            <person name="Skinner M.E."/>
            <person name="Lombard D.B."/>
            <person name="Zhao Y."/>
        </authorList>
    </citation>
    <scope>SUCCINYLATION [LARGE SCALE ANALYSIS] AT LYS-94; LYS-120 AND LYS-215</scope>
    <scope>IDENTIFICATION BY MASS SPECTROMETRY [LARGE SCALE ANALYSIS]</scope>
    <source>
        <tissue>Liver</tissue>
    </source>
</reference>
<reference key="5">
    <citation type="journal article" date="2013" name="Proc. Natl. Acad. Sci. U.S.A.">
        <title>Label-free quantitative proteomics of the lysine acetylome in mitochondria identifies substrates of SIRT3 in metabolic pathways.</title>
        <authorList>
            <person name="Rardin M.J."/>
            <person name="Newman J.C."/>
            <person name="Held J.M."/>
            <person name="Cusack M.P."/>
            <person name="Sorensen D.J."/>
            <person name="Li B."/>
            <person name="Schilling B."/>
            <person name="Mooney S.D."/>
            <person name="Kahn C.R."/>
            <person name="Verdin E."/>
            <person name="Gibson B.W."/>
        </authorList>
    </citation>
    <scope>ACETYLATION [LARGE SCALE ANALYSIS] AT LYS-94; LYS-100 AND LYS-215</scope>
    <scope>IDENTIFICATION BY MASS SPECTROMETRY [LARGE SCALE ANALYSIS]</scope>
    <source>
        <tissue>Liver</tissue>
    </source>
</reference>
<organism>
    <name type="scientific">Mus musculus</name>
    <name type="common">Mouse</name>
    <dbReference type="NCBI Taxonomy" id="10090"/>
    <lineage>
        <taxon>Eukaryota</taxon>
        <taxon>Metazoa</taxon>
        <taxon>Chordata</taxon>
        <taxon>Craniata</taxon>
        <taxon>Vertebrata</taxon>
        <taxon>Euteleostomi</taxon>
        <taxon>Mammalia</taxon>
        <taxon>Eutheria</taxon>
        <taxon>Euarchontoglires</taxon>
        <taxon>Glires</taxon>
        <taxon>Rodentia</taxon>
        <taxon>Myomorpha</taxon>
        <taxon>Muroidea</taxon>
        <taxon>Muridae</taxon>
        <taxon>Murinae</taxon>
        <taxon>Mus</taxon>
        <taxon>Mus</taxon>
    </lineage>
</organism>
<proteinExistence type="evidence at protein level"/>
<evidence type="ECO:0000250" key="1"/>
<evidence type="ECO:0000256" key="2">
    <source>
        <dbReference type="SAM" id="MobiDB-lite"/>
    </source>
</evidence>
<evidence type="ECO:0000305" key="3"/>
<evidence type="ECO:0007744" key="4">
    <source>
    </source>
</evidence>
<evidence type="ECO:0007744" key="5">
    <source>
    </source>
</evidence>
<keyword id="KW-0007">Acetylation</keyword>
<keyword id="KW-0143">Chaperone</keyword>
<keyword id="KW-0496">Mitochondrion</keyword>
<keyword id="KW-1185">Reference proteome</keyword>
<keyword id="KW-0809">Transit peptide</keyword>
<comment type="function">
    <text evidence="1">Essential component of the PAM complex, a complex required for the translocation of transit peptide-containing proteins from the inner membrane into the mitochondrial matrix in an ATP-dependent manner. Seems to control the nucleotide-dependent binding of mitochondrial HSP70 to substrate proteins (By similarity).</text>
</comment>
<comment type="subunit">
    <text evidence="1">Probable component of the PAM complex at least composed of a mitochondrial HSP70 protein, GRPEL1 or GRPEL2, TIMM44, TIMM16/PAM16 and TIMM14/DNAJC19. Binds to HSP70, HSC70 and HSJ1B (By similarity).</text>
</comment>
<comment type="subcellular location">
    <subcellularLocation>
        <location evidence="1">Mitochondrion matrix</location>
    </subcellularLocation>
</comment>
<comment type="similarity">
    <text evidence="3">Belongs to the GrpE family.</text>
</comment>
<name>GRPE1_MOUSE</name>
<protein>
    <recommendedName>
        <fullName>GrpE protein homolog 1, mitochondrial</fullName>
    </recommendedName>
    <alternativeName>
        <fullName>Mt-GrpE#1</fullName>
    </alternativeName>
</protein>
<dbReference type="EMBL" id="AK048732">
    <property type="protein sequence ID" value="BAC33437.1"/>
    <property type="molecule type" value="mRNA"/>
</dbReference>
<dbReference type="EMBL" id="AK050445">
    <property type="protein sequence ID" value="BAC34257.1"/>
    <property type="molecule type" value="mRNA"/>
</dbReference>
<dbReference type="EMBL" id="AK089113">
    <property type="protein sequence ID" value="BAC40758.1"/>
    <property type="molecule type" value="mRNA"/>
</dbReference>
<dbReference type="EMBL" id="AK161688">
    <property type="protein sequence ID" value="BAE36532.1"/>
    <property type="molecule type" value="mRNA"/>
</dbReference>
<dbReference type="EMBL" id="BC002284">
    <property type="protein sequence ID" value="AAH02284.1"/>
    <property type="molecule type" value="mRNA"/>
</dbReference>
<dbReference type="CCDS" id="CCDS19238.1"/>
<dbReference type="RefSeq" id="NP_077798.1">
    <property type="nucleotide sequence ID" value="NM_024478.2"/>
</dbReference>
<dbReference type="SMR" id="Q99LP6"/>
<dbReference type="BioGRID" id="201545">
    <property type="interactions" value="11"/>
</dbReference>
<dbReference type="FunCoup" id="Q99LP6">
    <property type="interactions" value="2999"/>
</dbReference>
<dbReference type="IntAct" id="Q99LP6">
    <property type="interactions" value="3"/>
</dbReference>
<dbReference type="STRING" id="10090.ENSMUSP00000031099"/>
<dbReference type="GlyGen" id="Q99LP6">
    <property type="glycosylation" value="1 site, 1 O-linked glycan (1 site)"/>
</dbReference>
<dbReference type="iPTMnet" id="Q99LP6"/>
<dbReference type="PhosphoSitePlus" id="Q99LP6"/>
<dbReference type="SwissPalm" id="Q99LP6"/>
<dbReference type="jPOST" id="Q99LP6"/>
<dbReference type="PaxDb" id="10090-ENSMUSP00000031099"/>
<dbReference type="PeptideAtlas" id="Q99LP6"/>
<dbReference type="ProteomicsDB" id="271101"/>
<dbReference type="Pumba" id="Q99LP6"/>
<dbReference type="Antibodypedia" id="22707">
    <property type="antibodies" value="155 antibodies from 25 providers"/>
</dbReference>
<dbReference type="DNASU" id="17713"/>
<dbReference type="Ensembl" id="ENSMUST00000031099.4">
    <property type="protein sequence ID" value="ENSMUSP00000031099.4"/>
    <property type="gene ID" value="ENSMUSG00000029198.4"/>
</dbReference>
<dbReference type="GeneID" id="17713"/>
<dbReference type="KEGG" id="mmu:17713"/>
<dbReference type="UCSC" id="uc008xep.1">
    <property type="organism name" value="mouse"/>
</dbReference>
<dbReference type="AGR" id="MGI:1334417"/>
<dbReference type="CTD" id="80273"/>
<dbReference type="MGI" id="MGI:1334417">
    <property type="gene designation" value="Grpel1"/>
</dbReference>
<dbReference type="VEuPathDB" id="HostDB:ENSMUSG00000029198"/>
<dbReference type="eggNOG" id="KOG3003">
    <property type="taxonomic scope" value="Eukaryota"/>
</dbReference>
<dbReference type="GeneTree" id="ENSGT00390000005589"/>
<dbReference type="HOGENOM" id="CLU_057217_0_1_1"/>
<dbReference type="InParanoid" id="Q99LP6"/>
<dbReference type="OMA" id="PHRHQAI"/>
<dbReference type="OrthoDB" id="201635at2759"/>
<dbReference type="PhylomeDB" id="Q99LP6"/>
<dbReference type="TreeFam" id="TF105284"/>
<dbReference type="BioGRID-ORCS" id="17713">
    <property type="hits" value="28 hits in 77 CRISPR screens"/>
</dbReference>
<dbReference type="ChiTaRS" id="Grpel1">
    <property type="organism name" value="mouse"/>
</dbReference>
<dbReference type="PRO" id="PR:Q99LP6"/>
<dbReference type="Proteomes" id="UP000000589">
    <property type="component" value="Chromosome 5"/>
</dbReference>
<dbReference type="RNAct" id="Q99LP6">
    <property type="molecule type" value="protein"/>
</dbReference>
<dbReference type="Bgee" id="ENSMUSG00000029198">
    <property type="expression patterns" value="Expressed in facial nucleus and 269 other cell types or tissues"/>
</dbReference>
<dbReference type="GO" id="GO:0005759">
    <property type="term" value="C:mitochondrial matrix"/>
    <property type="evidence" value="ECO:0007669"/>
    <property type="project" value="UniProtKB-SubCell"/>
</dbReference>
<dbReference type="GO" id="GO:0005739">
    <property type="term" value="C:mitochondrion"/>
    <property type="evidence" value="ECO:0007005"/>
    <property type="project" value="MGI"/>
</dbReference>
<dbReference type="GO" id="GO:0005654">
    <property type="term" value="C:nucleoplasm"/>
    <property type="evidence" value="ECO:0007669"/>
    <property type="project" value="Ensembl"/>
</dbReference>
<dbReference type="GO" id="GO:0000774">
    <property type="term" value="F:adenyl-nucleotide exchange factor activity"/>
    <property type="evidence" value="ECO:0007669"/>
    <property type="project" value="InterPro"/>
</dbReference>
<dbReference type="GO" id="GO:0042803">
    <property type="term" value="F:protein homodimerization activity"/>
    <property type="evidence" value="ECO:0007669"/>
    <property type="project" value="InterPro"/>
</dbReference>
<dbReference type="GO" id="GO:0051087">
    <property type="term" value="F:protein-folding chaperone binding"/>
    <property type="evidence" value="ECO:0007669"/>
    <property type="project" value="InterPro"/>
</dbReference>
<dbReference type="GO" id="GO:0051082">
    <property type="term" value="F:unfolded protein binding"/>
    <property type="evidence" value="ECO:0007669"/>
    <property type="project" value="Ensembl"/>
</dbReference>
<dbReference type="GO" id="GO:0006457">
    <property type="term" value="P:protein folding"/>
    <property type="evidence" value="ECO:0007669"/>
    <property type="project" value="InterPro"/>
</dbReference>
<dbReference type="CDD" id="cd00446">
    <property type="entry name" value="GrpE"/>
    <property type="match status" value="1"/>
</dbReference>
<dbReference type="FunFam" id="2.30.22.10:FF:000002">
    <property type="entry name" value="GrpE protein homolog"/>
    <property type="match status" value="1"/>
</dbReference>
<dbReference type="FunFam" id="3.90.20.20:FF:000003">
    <property type="entry name" value="GrpE protein homolog"/>
    <property type="match status" value="1"/>
</dbReference>
<dbReference type="Gene3D" id="3.90.20.20">
    <property type="match status" value="1"/>
</dbReference>
<dbReference type="Gene3D" id="2.30.22.10">
    <property type="entry name" value="Head domain of nucleotide exchange factor GrpE"/>
    <property type="match status" value="1"/>
</dbReference>
<dbReference type="HAMAP" id="MF_01151">
    <property type="entry name" value="GrpE"/>
    <property type="match status" value="1"/>
</dbReference>
<dbReference type="InterPro" id="IPR000740">
    <property type="entry name" value="GrpE"/>
</dbReference>
<dbReference type="InterPro" id="IPR013805">
    <property type="entry name" value="GrpE_coiled_coil"/>
</dbReference>
<dbReference type="InterPro" id="IPR009012">
    <property type="entry name" value="GrpE_head"/>
</dbReference>
<dbReference type="PANTHER" id="PTHR21237">
    <property type="entry name" value="GRPE PROTEIN"/>
    <property type="match status" value="1"/>
</dbReference>
<dbReference type="PANTHER" id="PTHR21237:SF25">
    <property type="entry name" value="GRPE PROTEIN HOMOLOG 1, MITOCHONDRIAL"/>
    <property type="match status" value="1"/>
</dbReference>
<dbReference type="Pfam" id="PF01025">
    <property type="entry name" value="GrpE"/>
    <property type="match status" value="1"/>
</dbReference>
<dbReference type="PRINTS" id="PR00773">
    <property type="entry name" value="GRPEPROTEIN"/>
</dbReference>
<dbReference type="SUPFAM" id="SSF58014">
    <property type="entry name" value="Coiled-coil domain of nucleotide exchange factor GrpE"/>
    <property type="match status" value="1"/>
</dbReference>
<dbReference type="SUPFAM" id="SSF51064">
    <property type="entry name" value="Head domain of nucleotide exchange factor GrpE"/>
    <property type="match status" value="1"/>
</dbReference>
<dbReference type="PROSITE" id="PS01071">
    <property type="entry name" value="GRPE"/>
    <property type="match status" value="1"/>
</dbReference>
<sequence length="217" mass="24307">MAARCVRLARRSLPALALSFRPSPRLLCTATKQKNNGQNLDEDLGHCEPKTDPPSADKTLLEEKAKLEEQLRETMEKYKRALADTENLRQRSQKLVEEAKLYGIQGFCKDLLEVADILEKATQSVPKEEISNNNPHLKSLYEGLVMTEVQIQKVFTKHGLLRLDPIGAKFDPYEHEALFHTPVEGKEPGTVALVSKVGYKLHGRTLRPALVGVVKDA</sequence>